<organism>
    <name type="scientific">Streptomyces avermitilis (strain ATCC 31267 / DSM 46492 / JCM 5070 / NBRC 14893 / NCIMB 12804 / NRRL 8165 / MA-4680)</name>
    <dbReference type="NCBI Taxonomy" id="227882"/>
    <lineage>
        <taxon>Bacteria</taxon>
        <taxon>Bacillati</taxon>
        <taxon>Actinomycetota</taxon>
        <taxon>Actinomycetes</taxon>
        <taxon>Kitasatosporales</taxon>
        <taxon>Streptomycetaceae</taxon>
        <taxon>Streptomyces</taxon>
    </lineage>
</organism>
<protein>
    <recommendedName>
        <fullName evidence="1">Proteasome subunit beta 1</fullName>
        <ecNumber evidence="1">3.4.25.1</ecNumber>
    </recommendedName>
    <alternativeName>
        <fullName evidence="1">20S proteasome beta subunit 1</fullName>
    </alternativeName>
    <alternativeName>
        <fullName evidence="1">Proteasome core protein PrcB 1</fullName>
    </alternativeName>
</protein>
<name>PSB1_STRAW</name>
<comment type="function">
    <text evidence="1">Component of the proteasome core, a large protease complex with broad specificity involved in protein degradation.</text>
</comment>
<comment type="catalytic activity">
    <reaction evidence="1">
        <text>Cleavage of peptide bonds with very broad specificity.</text>
        <dbReference type="EC" id="3.4.25.1"/>
    </reaction>
</comment>
<comment type="activity regulation">
    <text evidence="1">The formation of the proteasomal ATPase ARC-20S proteasome complex, likely via the docking of the C-termini of ARC into the intersubunit pockets in the alpha-rings, may trigger opening of the gate for substrate entry. Interconversion between the open-gate and close-gate conformations leads to a dynamic regulation of the 20S proteasome proteolysis activity.</text>
</comment>
<comment type="pathway">
    <text evidence="1">Protein degradation; proteasomal Pup-dependent pathway.</text>
</comment>
<comment type="subunit">
    <text evidence="1">The 20S proteasome core is composed of 14 alpha and 14 beta subunits that assemble into four stacked heptameric rings, resulting in a barrel-shaped structure. The two inner rings, each composed of seven catalytic beta subunits, are sandwiched by two outer rings, each composed of seven alpha subunits. The catalytic chamber with the active sites is on the inside of the barrel. Has a gated structure, the ends of the cylinder being occluded by the N-termini of the alpha-subunits. Is capped by the proteasome-associated ATPase, ARC.</text>
</comment>
<comment type="subcellular location">
    <subcellularLocation>
        <location evidence="1">Cytoplasm</location>
    </subcellularLocation>
</comment>
<comment type="similarity">
    <text evidence="1">Belongs to the peptidase T1B family.</text>
</comment>
<evidence type="ECO:0000255" key="1">
    <source>
        <dbReference type="HAMAP-Rule" id="MF_02113"/>
    </source>
</evidence>
<evidence type="ECO:0000256" key="2">
    <source>
        <dbReference type="SAM" id="MobiDB-lite"/>
    </source>
</evidence>
<gene>
    <name evidence="1" type="primary">prcB1</name>
    <name type="synonym">prcB2</name>
    <name type="ordered locus">SAV_2812</name>
</gene>
<sequence length="284" mass="30460">MAQRDTGGRLGAEFFTPGDSSFTAFLAAHRPALLSTRGLLPDGVRAAPDRVPHGTTVLALAYRDGVLIAGDRRATMGNLIAQRDLEKVHPADDYTAVAFAGTVGLALDMVKLYQVELAHFEKVEGVPMTLRAKATRLAGMIRQNLGQAMQGLAVVPLLVGYDLAARAGEHGRIFSFDVTGGPYEKTDFHAEGSGSPYARGALKKLFHPGMSRREAALAALQALYDAADDDSATGGPDISRRIFPVVSVITEDGFERLPESETEDLSREMVEQRHTRPDGPTAAM</sequence>
<reference key="1">
    <citation type="journal article" date="2001" name="Proc. Natl. Acad. Sci. U.S.A.">
        <title>Genome sequence of an industrial microorganism Streptomyces avermitilis: deducing the ability of producing secondary metabolites.</title>
        <authorList>
            <person name="Omura S."/>
            <person name="Ikeda H."/>
            <person name="Ishikawa J."/>
            <person name="Hanamoto A."/>
            <person name="Takahashi C."/>
            <person name="Shinose M."/>
            <person name="Takahashi Y."/>
            <person name="Horikawa H."/>
            <person name="Nakazawa H."/>
            <person name="Osonoe T."/>
            <person name="Kikuchi H."/>
            <person name="Shiba T."/>
            <person name="Sakaki Y."/>
            <person name="Hattori M."/>
        </authorList>
    </citation>
    <scope>NUCLEOTIDE SEQUENCE [LARGE SCALE GENOMIC DNA]</scope>
    <source>
        <strain>ATCC 31267 / DSM 46492 / JCM 5070 / NBRC 14893 / NCIMB 12804 / NRRL 8165 / MA-4680</strain>
    </source>
</reference>
<reference key="2">
    <citation type="journal article" date="2003" name="Nat. Biotechnol.">
        <title>Complete genome sequence and comparative analysis of the industrial microorganism Streptomyces avermitilis.</title>
        <authorList>
            <person name="Ikeda H."/>
            <person name="Ishikawa J."/>
            <person name="Hanamoto A."/>
            <person name="Shinose M."/>
            <person name="Kikuchi H."/>
            <person name="Shiba T."/>
            <person name="Sakaki Y."/>
            <person name="Hattori M."/>
            <person name="Omura S."/>
        </authorList>
    </citation>
    <scope>NUCLEOTIDE SEQUENCE [LARGE SCALE GENOMIC DNA]</scope>
    <source>
        <strain>ATCC 31267 / DSM 46492 / JCM 5070 / NBRC 14893 / NCIMB 12804 / NRRL 8165 / MA-4680</strain>
    </source>
</reference>
<keyword id="KW-0068">Autocatalytic cleavage</keyword>
<keyword id="KW-0963">Cytoplasm</keyword>
<keyword id="KW-0378">Hydrolase</keyword>
<keyword id="KW-0645">Protease</keyword>
<keyword id="KW-0647">Proteasome</keyword>
<keyword id="KW-1185">Reference proteome</keyword>
<keyword id="KW-0888">Threonine protease</keyword>
<keyword id="KW-0865">Zymogen</keyword>
<dbReference type="EC" id="3.4.25.1" evidence="1"/>
<dbReference type="EMBL" id="BA000030">
    <property type="protein sequence ID" value="BAC70523.1"/>
    <property type="molecule type" value="Genomic_DNA"/>
</dbReference>
<dbReference type="SMR" id="Q82JE3"/>
<dbReference type="MEROPS" id="T01.005"/>
<dbReference type="GeneID" id="41539899"/>
<dbReference type="KEGG" id="sma:SAVERM_2812"/>
<dbReference type="eggNOG" id="COG0638">
    <property type="taxonomic scope" value="Bacteria"/>
</dbReference>
<dbReference type="HOGENOM" id="CLU_035750_2_0_11"/>
<dbReference type="OrthoDB" id="5174038at2"/>
<dbReference type="UniPathway" id="UPA00997"/>
<dbReference type="Proteomes" id="UP000000428">
    <property type="component" value="Chromosome"/>
</dbReference>
<dbReference type="GO" id="GO:0005737">
    <property type="term" value="C:cytoplasm"/>
    <property type="evidence" value="ECO:0007669"/>
    <property type="project" value="UniProtKB-SubCell"/>
</dbReference>
<dbReference type="GO" id="GO:0019774">
    <property type="term" value="C:proteasome core complex, beta-subunit complex"/>
    <property type="evidence" value="ECO:0007669"/>
    <property type="project" value="UniProtKB-UniRule"/>
</dbReference>
<dbReference type="GO" id="GO:0004298">
    <property type="term" value="F:threonine-type endopeptidase activity"/>
    <property type="evidence" value="ECO:0007669"/>
    <property type="project" value="UniProtKB-UniRule"/>
</dbReference>
<dbReference type="GO" id="GO:0019941">
    <property type="term" value="P:modification-dependent protein catabolic process"/>
    <property type="evidence" value="ECO:0007669"/>
    <property type="project" value="UniProtKB-UniRule"/>
</dbReference>
<dbReference type="GO" id="GO:0010498">
    <property type="term" value="P:proteasomal protein catabolic process"/>
    <property type="evidence" value="ECO:0007669"/>
    <property type="project" value="UniProtKB-UniRule"/>
</dbReference>
<dbReference type="CDD" id="cd01906">
    <property type="entry name" value="proteasome_protease_HslV"/>
    <property type="match status" value="1"/>
</dbReference>
<dbReference type="Gene3D" id="3.60.20.10">
    <property type="entry name" value="Glutamine Phosphoribosylpyrophosphate, subunit 1, domain 1"/>
    <property type="match status" value="1"/>
</dbReference>
<dbReference type="HAMAP" id="MF_02113_B">
    <property type="entry name" value="Proteasome_B_B"/>
    <property type="match status" value="1"/>
</dbReference>
<dbReference type="InterPro" id="IPR029055">
    <property type="entry name" value="Ntn_hydrolases_N"/>
</dbReference>
<dbReference type="InterPro" id="IPR001353">
    <property type="entry name" value="Proteasome_sua/b"/>
</dbReference>
<dbReference type="InterPro" id="IPR023333">
    <property type="entry name" value="Proteasome_suB-type"/>
</dbReference>
<dbReference type="InterPro" id="IPR022483">
    <property type="entry name" value="PSB_actinobac"/>
</dbReference>
<dbReference type="NCBIfam" id="TIGR03690">
    <property type="entry name" value="20S_bact_beta"/>
    <property type="match status" value="1"/>
</dbReference>
<dbReference type="PANTHER" id="PTHR32194:SF0">
    <property type="entry name" value="ATP-DEPENDENT PROTEASE SUBUNIT HSLV"/>
    <property type="match status" value="1"/>
</dbReference>
<dbReference type="PANTHER" id="PTHR32194">
    <property type="entry name" value="METALLOPROTEASE TLDD"/>
    <property type="match status" value="1"/>
</dbReference>
<dbReference type="Pfam" id="PF00227">
    <property type="entry name" value="Proteasome"/>
    <property type="match status" value="1"/>
</dbReference>
<dbReference type="SUPFAM" id="SSF56235">
    <property type="entry name" value="N-terminal nucleophile aminohydrolases (Ntn hydrolases)"/>
    <property type="match status" value="1"/>
</dbReference>
<dbReference type="PROSITE" id="PS51476">
    <property type="entry name" value="PROTEASOME_BETA_2"/>
    <property type="match status" value="1"/>
</dbReference>
<feature type="propeptide" id="PRO_0000397586" description="Removed in mature form; by autocatalysis" evidence="1">
    <location>
        <begin position="1"/>
        <end position="54"/>
    </location>
</feature>
<feature type="chain" id="PRO_0000397587" description="Proteasome subunit beta 1">
    <location>
        <begin position="55"/>
        <end position="284"/>
    </location>
</feature>
<feature type="region of interest" description="Disordered" evidence="2">
    <location>
        <begin position="256"/>
        <end position="284"/>
    </location>
</feature>
<feature type="compositionally biased region" description="Basic and acidic residues" evidence="2">
    <location>
        <begin position="256"/>
        <end position="277"/>
    </location>
</feature>
<feature type="active site" description="Nucleophile" evidence="1">
    <location>
        <position position="55"/>
    </location>
</feature>
<accession>Q82JE3</accession>
<proteinExistence type="inferred from homology"/>